<reference key="1">
    <citation type="journal article" date="2007" name="DNA Res.">
        <title>Complete genomic structure of the bloom-forming toxic cyanobacterium Microcystis aeruginosa NIES-843.</title>
        <authorList>
            <person name="Kaneko T."/>
            <person name="Nakajima N."/>
            <person name="Okamoto S."/>
            <person name="Suzuki I."/>
            <person name="Tanabe Y."/>
            <person name="Tamaoki M."/>
            <person name="Nakamura Y."/>
            <person name="Kasai F."/>
            <person name="Watanabe A."/>
            <person name="Kawashima K."/>
            <person name="Kishida Y."/>
            <person name="Ono A."/>
            <person name="Shimizu Y."/>
            <person name="Takahashi C."/>
            <person name="Minami C."/>
            <person name="Fujishiro T."/>
            <person name="Kohara M."/>
            <person name="Katoh M."/>
            <person name="Nakazaki N."/>
            <person name="Nakayama S."/>
            <person name="Yamada M."/>
            <person name="Tabata S."/>
            <person name="Watanabe M.M."/>
        </authorList>
    </citation>
    <scope>NUCLEOTIDE SEQUENCE [LARGE SCALE GENOMIC DNA]</scope>
    <source>
        <strain>NIES-843 / IAM M-247</strain>
    </source>
</reference>
<comment type="function">
    <text evidence="1">Participates actively in the response to hyperosmotic and heat shock by preventing the aggregation of stress-denatured proteins and by disaggregating proteins, also in an autonomous, DnaK-independent fashion. Unfolded proteins bind initially to DnaJ; upon interaction with the DnaJ-bound protein, DnaK hydrolyzes its bound ATP, resulting in the formation of a stable complex. GrpE releases ADP from DnaK; ATP binding to DnaK triggers the release of the substrate protein, thus completing the reaction cycle. Several rounds of ATP-dependent interactions between DnaJ, DnaK and GrpE are required for fully efficient folding. Also involved, together with DnaK and GrpE, in the DNA replication of plasmids through activation of initiation proteins.</text>
</comment>
<comment type="cofactor">
    <cofactor evidence="1">
        <name>Zn(2+)</name>
        <dbReference type="ChEBI" id="CHEBI:29105"/>
    </cofactor>
    <text evidence="1">Binds 2 Zn(2+) ions per monomer.</text>
</comment>
<comment type="subunit">
    <text evidence="1">Homodimer.</text>
</comment>
<comment type="subcellular location">
    <subcellularLocation>
        <location evidence="1">Cytoplasm</location>
    </subcellularLocation>
</comment>
<comment type="domain">
    <text evidence="1">The J domain is necessary and sufficient to stimulate DnaK ATPase activity. Zinc center 1 plays an important role in the autonomous, DnaK-independent chaperone activity of DnaJ. Zinc center 2 is essential for interaction with DnaK and for DnaJ activity.</text>
</comment>
<comment type="similarity">
    <text evidence="1">Belongs to the DnaJ family.</text>
</comment>
<feature type="chain" id="PRO_1000085229" description="Chaperone protein DnaJ">
    <location>
        <begin position="1"/>
        <end position="374"/>
    </location>
</feature>
<feature type="domain" description="J" evidence="1">
    <location>
        <begin position="4"/>
        <end position="68"/>
    </location>
</feature>
<feature type="repeat" description="CXXCXGXG motif">
    <location>
        <begin position="146"/>
        <end position="153"/>
    </location>
</feature>
<feature type="repeat" description="CXXCXGXG motif">
    <location>
        <begin position="163"/>
        <end position="170"/>
    </location>
</feature>
<feature type="repeat" description="CXXCXGXG motif">
    <location>
        <begin position="189"/>
        <end position="196"/>
    </location>
</feature>
<feature type="repeat" description="CXXCXGXG motif">
    <location>
        <begin position="203"/>
        <end position="210"/>
    </location>
</feature>
<feature type="zinc finger region" description="CR-type" evidence="1">
    <location>
        <begin position="133"/>
        <end position="215"/>
    </location>
</feature>
<feature type="binding site" evidence="1">
    <location>
        <position position="146"/>
    </location>
    <ligand>
        <name>Zn(2+)</name>
        <dbReference type="ChEBI" id="CHEBI:29105"/>
        <label>1</label>
    </ligand>
</feature>
<feature type="binding site" evidence="1">
    <location>
        <position position="149"/>
    </location>
    <ligand>
        <name>Zn(2+)</name>
        <dbReference type="ChEBI" id="CHEBI:29105"/>
        <label>1</label>
    </ligand>
</feature>
<feature type="binding site" evidence="1">
    <location>
        <position position="163"/>
    </location>
    <ligand>
        <name>Zn(2+)</name>
        <dbReference type="ChEBI" id="CHEBI:29105"/>
        <label>2</label>
    </ligand>
</feature>
<feature type="binding site" evidence="1">
    <location>
        <position position="166"/>
    </location>
    <ligand>
        <name>Zn(2+)</name>
        <dbReference type="ChEBI" id="CHEBI:29105"/>
        <label>2</label>
    </ligand>
</feature>
<feature type="binding site" evidence="1">
    <location>
        <position position="189"/>
    </location>
    <ligand>
        <name>Zn(2+)</name>
        <dbReference type="ChEBI" id="CHEBI:29105"/>
        <label>2</label>
    </ligand>
</feature>
<feature type="binding site" evidence="1">
    <location>
        <position position="192"/>
    </location>
    <ligand>
        <name>Zn(2+)</name>
        <dbReference type="ChEBI" id="CHEBI:29105"/>
        <label>2</label>
    </ligand>
</feature>
<feature type="binding site" evidence="1">
    <location>
        <position position="203"/>
    </location>
    <ligand>
        <name>Zn(2+)</name>
        <dbReference type="ChEBI" id="CHEBI:29105"/>
        <label>1</label>
    </ligand>
</feature>
<feature type="binding site" evidence="1">
    <location>
        <position position="206"/>
    </location>
    <ligand>
        <name>Zn(2+)</name>
        <dbReference type="ChEBI" id="CHEBI:29105"/>
        <label>1</label>
    </ligand>
</feature>
<proteinExistence type="inferred from homology"/>
<keyword id="KW-0143">Chaperone</keyword>
<keyword id="KW-0963">Cytoplasm</keyword>
<keyword id="KW-0235">DNA replication</keyword>
<keyword id="KW-0479">Metal-binding</keyword>
<keyword id="KW-0677">Repeat</keyword>
<keyword id="KW-0346">Stress response</keyword>
<keyword id="KW-0862">Zinc</keyword>
<keyword id="KW-0863">Zinc-finger</keyword>
<name>DNAJ_MICAN</name>
<evidence type="ECO:0000255" key="1">
    <source>
        <dbReference type="HAMAP-Rule" id="MF_01152"/>
    </source>
</evidence>
<dbReference type="EMBL" id="AP009552">
    <property type="protein sequence ID" value="BAG04766.1"/>
    <property type="molecule type" value="Genomic_DNA"/>
</dbReference>
<dbReference type="RefSeq" id="WP_002795599.1">
    <property type="nucleotide sequence ID" value="NC_010296.1"/>
</dbReference>
<dbReference type="SMR" id="B0JW23"/>
<dbReference type="STRING" id="449447.MAE_49440"/>
<dbReference type="PaxDb" id="449447-MAE_49440"/>
<dbReference type="EnsemblBacteria" id="BAG04766">
    <property type="protein sequence ID" value="BAG04766"/>
    <property type="gene ID" value="MAE_49440"/>
</dbReference>
<dbReference type="KEGG" id="mar:MAE_49440"/>
<dbReference type="eggNOG" id="COG0484">
    <property type="taxonomic scope" value="Bacteria"/>
</dbReference>
<dbReference type="HOGENOM" id="CLU_017633_0_1_3"/>
<dbReference type="BioCyc" id="MAER449447:MAE_RS21445-MONOMER"/>
<dbReference type="Proteomes" id="UP000001510">
    <property type="component" value="Chromosome"/>
</dbReference>
<dbReference type="GO" id="GO:0005737">
    <property type="term" value="C:cytoplasm"/>
    <property type="evidence" value="ECO:0007669"/>
    <property type="project" value="UniProtKB-SubCell"/>
</dbReference>
<dbReference type="GO" id="GO:0005524">
    <property type="term" value="F:ATP binding"/>
    <property type="evidence" value="ECO:0007669"/>
    <property type="project" value="InterPro"/>
</dbReference>
<dbReference type="GO" id="GO:0031072">
    <property type="term" value="F:heat shock protein binding"/>
    <property type="evidence" value="ECO:0007669"/>
    <property type="project" value="InterPro"/>
</dbReference>
<dbReference type="GO" id="GO:0051082">
    <property type="term" value="F:unfolded protein binding"/>
    <property type="evidence" value="ECO:0007669"/>
    <property type="project" value="UniProtKB-UniRule"/>
</dbReference>
<dbReference type="GO" id="GO:0008270">
    <property type="term" value="F:zinc ion binding"/>
    <property type="evidence" value="ECO:0007669"/>
    <property type="project" value="UniProtKB-UniRule"/>
</dbReference>
<dbReference type="GO" id="GO:0051085">
    <property type="term" value="P:chaperone cofactor-dependent protein refolding"/>
    <property type="evidence" value="ECO:0007669"/>
    <property type="project" value="TreeGrafter"/>
</dbReference>
<dbReference type="GO" id="GO:0006260">
    <property type="term" value="P:DNA replication"/>
    <property type="evidence" value="ECO:0007669"/>
    <property type="project" value="UniProtKB-KW"/>
</dbReference>
<dbReference type="GO" id="GO:0042026">
    <property type="term" value="P:protein refolding"/>
    <property type="evidence" value="ECO:0007669"/>
    <property type="project" value="TreeGrafter"/>
</dbReference>
<dbReference type="GO" id="GO:0009408">
    <property type="term" value="P:response to heat"/>
    <property type="evidence" value="ECO:0007669"/>
    <property type="project" value="InterPro"/>
</dbReference>
<dbReference type="CDD" id="cd06257">
    <property type="entry name" value="DnaJ"/>
    <property type="match status" value="1"/>
</dbReference>
<dbReference type="CDD" id="cd10747">
    <property type="entry name" value="DnaJ_C"/>
    <property type="match status" value="1"/>
</dbReference>
<dbReference type="CDD" id="cd10719">
    <property type="entry name" value="DnaJ_zf"/>
    <property type="match status" value="1"/>
</dbReference>
<dbReference type="FunFam" id="2.60.260.20:FF:000005">
    <property type="entry name" value="Chaperone protein dnaJ 1, mitochondrial"/>
    <property type="match status" value="1"/>
</dbReference>
<dbReference type="FunFam" id="2.10.230.10:FF:000002">
    <property type="entry name" value="Molecular chaperone DnaJ"/>
    <property type="match status" value="1"/>
</dbReference>
<dbReference type="Gene3D" id="1.10.287.110">
    <property type="entry name" value="DnaJ domain"/>
    <property type="match status" value="1"/>
</dbReference>
<dbReference type="Gene3D" id="2.10.230.10">
    <property type="entry name" value="Heat shock protein DnaJ, cysteine-rich domain"/>
    <property type="match status" value="1"/>
</dbReference>
<dbReference type="Gene3D" id="2.60.260.20">
    <property type="entry name" value="Urease metallochaperone UreE, N-terminal domain"/>
    <property type="match status" value="2"/>
</dbReference>
<dbReference type="HAMAP" id="MF_01152">
    <property type="entry name" value="DnaJ"/>
    <property type="match status" value="1"/>
</dbReference>
<dbReference type="InterPro" id="IPR012724">
    <property type="entry name" value="DnaJ"/>
</dbReference>
<dbReference type="InterPro" id="IPR002939">
    <property type="entry name" value="DnaJ_C"/>
</dbReference>
<dbReference type="InterPro" id="IPR001623">
    <property type="entry name" value="DnaJ_domain"/>
</dbReference>
<dbReference type="InterPro" id="IPR008971">
    <property type="entry name" value="HSP40/DnaJ_pept-bd"/>
</dbReference>
<dbReference type="InterPro" id="IPR001305">
    <property type="entry name" value="HSP_DnaJ_Cys-rich_dom"/>
</dbReference>
<dbReference type="InterPro" id="IPR036410">
    <property type="entry name" value="HSP_DnaJ_Cys-rich_dom_sf"/>
</dbReference>
<dbReference type="InterPro" id="IPR036869">
    <property type="entry name" value="J_dom_sf"/>
</dbReference>
<dbReference type="NCBIfam" id="TIGR02349">
    <property type="entry name" value="DnaJ_bact"/>
    <property type="match status" value="1"/>
</dbReference>
<dbReference type="NCBIfam" id="NF008035">
    <property type="entry name" value="PRK10767.1"/>
    <property type="match status" value="1"/>
</dbReference>
<dbReference type="NCBIfam" id="NF010886">
    <property type="entry name" value="PRK14293.1"/>
    <property type="match status" value="1"/>
</dbReference>
<dbReference type="PANTHER" id="PTHR43096:SF10">
    <property type="entry name" value="CHAPERONE PROTEIN DNAJ A6, CHLOROPLASTIC"/>
    <property type="match status" value="1"/>
</dbReference>
<dbReference type="PANTHER" id="PTHR43096">
    <property type="entry name" value="DNAJ HOMOLOG 1, MITOCHONDRIAL-RELATED"/>
    <property type="match status" value="1"/>
</dbReference>
<dbReference type="Pfam" id="PF00226">
    <property type="entry name" value="DnaJ"/>
    <property type="match status" value="1"/>
</dbReference>
<dbReference type="Pfam" id="PF01556">
    <property type="entry name" value="DnaJ_C"/>
    <property type="match status" value="1"/>
</dbReference>
<dbReference type="Pfam" id="PF00684">
    <property type="entry name" value="DnaJ_CXXCXGXG"/>
    <property type="match status" value="1"/>
</dbReference>
<dbReference type="PRINTS" id="PR00625">
    <property type="entry name" value="JDOMAIN"/>
</dbReference>
<dbReference type="SMART" id="SM00271">
    <property type="entry name" value="DnaJ"/>
    <property type="match status" value="1"/>
</dbReference>
<dbReference type="SUPFAM" id="SSF46565">
    <property type="entry name" value="Chaperone J-domain"/>
    <property type="match status" value="1"/>
</dbReference>
<dbReference type="SUPFAM" id="SSF57938">
    <property type="entry name" value="DnaJ/Hsp40 cysteine-rich domain"/>
    <property type="match status" value="1"/>
</dbReference>
<dbReference type="SUPFAM" id="SSF49493">
    <property type="entry name" value="HSP40/DnaJ peptide-binding domain"/>
    <property type="match status" value="2"/>
</dbReference>
<dbReference type="PROSITE" id="PS50076">
    <property type="entry name" value="DNAJ_2"/>
    <property type="match status" value="1"/>
</dbReference>
<dbReference type="PROSITE" id="PS51188">
    <property type="entry name" value="ZF_CR"/>
    <property type="match status" value="1"/>
</dbReference>
<protein>
    <recommendedName>
        <fullName evidence="1">Chaperone protein DnaJ</fullName>
    </recommendedName>
</protein>
<sequence>MPTDYYEILGVSRDAGKEDIKRAYRRLARKYHPDVNKEPGAEEHFKEINRAYEILSEPETRNRYDRFGEAGVSGGAAGFDPDNMGGFADIFETIFSGFGGMGGQATARRRTGPTRGEDLRLDFRLKFREAVFGGEKEIRIRHLETCQTCKGSGARPGTSSRTCTTCSGTGQVRRATRTPFGTFAQVSVCPTCDGAGEVIEEKCDVCGGSGRRQETKKLKITIPAGVDNGMKLRVAREGDAGLKGGPPGDLFVYLTVETDAEFQREGNDIKSDITISYIQAILGCTIKVNTVDGQEDLTIPAGTQPNTVLILENKGVPKLGNPVSRGDHRITVKISIPTRVTGEERELLEKLAKVRGETVGKGGIEGFLGNIFHK</sequence>
<accession>B0JW23</accession>
<organism>
    <name type="scientific">Microcystis aeruginosa (strain NIES-843 / IAM M-2473)</name>
    <dbReference type="NCBI Taxonomy" id="449447"/>
    <lineage>
        <taxon>Bacteria</taxon>
        <taxon>Bacillati</taxon>
        <taxon>Cyanobacteriota</taxon>
        <taxon>Cyanophyceae</taxon>
        <taxon>Oscillatoriophycideae</taxon>
        <taxon>Chroococcales</taxon>
        <taxon>Microcystaceae</taxon>
        <taxon>Microcystis</taxon>
    </lineage>
</organism>
<gene>
    <name evidence="1" type="primary">dnaJ</name>
    <name type="ordered locus">MAE_49440</name>
</gene>